<keyword id="KW-0028">Amino-acid biosynthesis</keyword>
<keyword id="KW-0413">Isomerase</keyword>
<keyword id="KW-0486">Methionine biosynthesis</keyword>
<keyword id="KW-1185">Reference proteome</keyword>
<dbReference type="EC" id="5.3.1.23" evidence="1"/>
<dbReference type="EMBL" id="CP000924">
    <property type="protein sequence ID" value="ABY94535.1"/>
    <property type="molecule type" value="Genomic_DNA"/>
</dbReference>
<dbReference type="RefSeq" id="WP_003867676.1">
    <property type="nucleotide sequence ID" value="NC_010321.1"/>
</dbReference>
<dbReference type="SMR" id="B0K8S2"/>
<dbReference type="STRING" id="340099.Teth39_0879"/>
<dbReference type="KEGG" id="tpd:Teth39_0879"/>
<dbReference type="eggNOG" id="COG0182">
    <property type="taxonomic scope" value="Bacteria"/>
</dbReference>
<dbReference type="HOGENOM" id="CLU_016218_1_2_9"/>
<dbReference type="UniPathway" id="UPA00904">
    <property type="reaction ID" value="UER00874"/>
</dbReference>
<dbReference type="Proteomes" id="UP000002156">
    <property type="component" value="Chromosome"/>
</dbReference>
<dbReference type="GO" id="GO:0046523">
    <property type="term" value="F:S-methyl-5-thioribose-1-phosphate isomerase activity"/>
    <property type="evidence" value="ECO:0007669"/>
    <property type="project" value="UniProtKB-UniRule"/>
</dbReference>
<dbReference type="GO" id="GO:0019509">
    <property type="term" value="P:L-methionine salvage from methylthioadenosine"/>
    <property type="evidence" value="ECO:0007669"/>
    <property type="project" value="UniProtKB-UniRule"/>
</dbReference>
<dbReference type="FunFam" id="1.20.120.420:FF:000003">
    <property type="entry name" value="Methylthioribose-1-phosphate isomerase"/>
    <property type="match status" value="1"/>
</dbReference>
<dbReference type="FunFam" id="3.40.50.10470:FF:000006">
    <property type="entry name" value="Methylthioribose-1-phosphate isomerase"/>
    <property type="match status" value="1"/>
</dbReference>
<dbReference type="Gene3D" id="1.20.120.420">
    <property type="entry name" value="translation initiation factor eif-2b, domain 1"/>
    <property type="match status" value="1"/>
</dbReference>
<dbReference type="Gene3D" id="3.40.50.10470">
    <property type="entry name" value="Translation initiation factor eif-2b, domain 2"/>
    <property type="match status" value="1"/>
</dbReference>
<dbReference type="HAMAP" id="MF_01678">
    <property type="entry name" value="Salvage_MtnA"/>
    <property type="match status" value="1"/>
</dbReference>
<dbReference type="InterPro" id="IPR000649">
    <property type="entry name" value="IF-2B-related"/>
</dbReference>
<dbReference type="InterPro" id="IPR005251">
    <property type="entry name" value="IF-M1Pi"/>
</dbReference>
<dbReference type="InterPro" id="IPR042529">
    <property type="entry name" value="IF_2B-like_C"/>
</dbReference>
<dbReference type="InterPro" id="IPR011559">
    <property type="entry name" value="Initiation_fac_2B_a/b/d"/>
</dbReference>
<dbReference type="InterPro" id="IPR027363">
    <property type="entry name" value="M1Pi_N"/>
</dbReference>
<dbReference type="InterPro" id="IPR037171">
    <property type="entry name" value="NagB/RpiA_transferase-like"/>
</dbReference>
<dbReference type="NCBIfam" id="TIGR00524">
    <property type="entry name" value="eIF-2B_rel"/>
    <property type="match status" value="1"/>
</dbReference>
<dbReference type="NCBIfam" id="NF004326">
    <property type="entry name" value="PRK05720.1"/>
    <property type="match status" value="1"/>
</dbReference>
<dbReference type="NCBIfam" id="TIGR00512">
    <property type="entry name" value="salvage_mtnA"/>
    <property type="match status" value="1"/>
</dbReference>
<dbReference type="PANTHER" id="PTHR43475">
    <property type="entry name" value="METHYLTHIORIBOSE-1-PHOSPHATE ISOMERASE"/>
    <property type="match status" value="1"/>
</dbReference>
<dbReference type="PANTHER" id="PTHR43475:SF1">
    <property type="entry name" value="METHYLTHIORIBOSE-1-PHOSPHATE ISOMERASE"/>
    <property type="match status" value="1"/>
</dbReference>
<dbReference type="Pfam" id="PF01008">
    <property type="entry name" value="IF-2B"/>
    <property type="match status" value="1"/>
</dbReference>
<dbReference type="SUPFAM" id="SSF100950">
    <property type="entry name" value="NagB/RpiA/CoA transferase-like"/>
    <property type="match status" value="1"/>
</dbReference>
<gene>
    <name evidence="1" type="primary">mtnA</name>
    <name type="ordered locus">Teth39_0879</name>
</gene>
<evidence type="ECO:0000255" key="1">
    <source>
        <dbReference type="HAMAP-Rule" id="MF_01678"/>
    </source>
</evidence>
<evidence type="ECO:0000305" key="2"/>
<proteinExistence type="inferred from homology"/>
<comment type="function">
    <text evidence="1">Catalyzes the interconversion of methylthioribose-1-phosphate (MTR-1-P) into methylthioribulose-1-phosphate (MTRu-1-P).</text>
</comment>
<comment type="catalytic activity">
    <reaction evidence="1">
        <text>5-(methylsulfanyl)-alpha-D-ribose 1-phosphate = 5-(methylsulfanyl)-D-ribulose 1-phosphate</text>
        <dbReference type="Rhea" id="RHEA:19989"/>
        <dbReference type="ChEBI" id="CHEBI:58533"/>
        <dbReference type="ChEBI" id="CHEBI:58548"/>
        <dbReference type="EC" id="5.3.1.23"/>
    </reaction>
</comment>
<comment type="pathway">
    <text evidence="1">Amino-acid biosynthesis; L-methionine biosynthesis via salvage pathway; L-methionine from S-methyl-5-thio-alpha-D-ribose 1-phosphate: step 1/6.</text>
</comment>
<comment type="similarity">
    <text evidence="2">Belongs to the eIF-2B alpha/beta/delta subunits family. MtnA subfamily.</text>
</comment>
<sequence length="345" mass="38523">MKEIKSIEFKNEVLYLIDQRKLPNSYEIFECKTYRDVNFAIKEMVVRGAPAIGAAAAYGVVLAAKEFLKEDREIFFEKIEEALEVIANSRPTAVNLMWAVKRMKKVIEKNKELELIDIYQALKKEADSIYLEDIETNKKMAKFGNEVIKENAVILTHCNTGALATVGYGTALGVIREAHYSGKNIFVYADETRPRLQGSKLTAWELVQEGIPAKLIADSVAATLIRDGKIDVILVGADRIALNGDTANKIGTFMLSVIAKVYNVPFYVVAPTSTIDFEIESGKEIIIEERSPEEVTHINGVRIAPEGIEVYNPAFDVTPHENITGIITEKGIIKPPYKENILKLK</sequence>
<reference key="1">
    <citation type="submission" date="2008-01" db="EMBL/GenBank/DDBJ databases">
        <title>Complete sequence of Thermoanaerobacter pseudethanolicus 39E.</title>
        <authorList>
            <person name="Copeland A."/>
            <person name="Lucas S."/>
            <person name="Lapidus A."/>
            <person name="Barry K."/>
            <person name="Glavina del Rio T."/>
            <person name="Dalin E."/>
            <person name="Tice H."/>
            <person name="Pitluck S."/>
            <person name="Bruce D."/>
            <person name="Goodwin L."/>
            <person name="Saunders E."/>
            <person name="Brettin T."/>
            <person name="Detter J.C."/>
            <person name="Han C."/>
            <person name="Schmutz J."/>
            <person name="Larimer F."/>
            <person name="Land M."/>
            <person name="Hauser L."/>
            <person name="Kyrpides N."/>
            <person name="Lykidis A."/>
            <person name="Hemme C."/>
            <person name="Fields M.W."/>
            <person name="He Z."/>
            <person name="Zhou J."/>
            <person name="Richardson P."/>
        </authorList>
    </citation>
    <scope>NUCLEOTIDE SEQUENCE [LARGE SCALE GENOMIC DNA]</scope>
    <source>
        <strain>ATCC 33223 / DSM 2355 / 39E</strain>
    </source>
</reference>
<accession>B0K8S2</accession>
<name>MTNA_THEP3</name>
<protein>
    <recommendedName>
        <fullName evidence="1">Methylthioribose-1-phosphate isomerase</fullName>
        <shortName evidence="1">M1Pi</shortName>
        <shortName evidence="1">MTR-1-P isomerase</shortName>
        <ecNumber evidence="1">5.3.1.23</ecNumber>
    </recommendedName>
    <alternativeName>
        <fullName evidence="1">S-methyl-5-thioribose-1-phosphate isomerase</fullName>
    </alternativeName>
</protein>
<organism>
    <name type="scientific">Thermoanaerobacter pseudethanolicus (strain ATCC 33223 / 39E)</name>
    <name type="common">Clostridium thermohydrosulfuricum</name>
    <dbReference type="NCBI Taxonomy" id="340099"/>
    <lineage>
        <taxon>Bacteria</taxon>
        <taxon>Bacillati</taxon>
        <taxon>Bacillota</taxon>
        <taxon>Clostridia</taxon>
        <taxon>Thermoanaerobacterales</taxon>
        <taxon>Thermoanaerobacteraceae</taxon>
        <taxon>Thermoanaerobacter</taxon>
    </lineage>
</organism>
<feature type="chain" id="PRO_0000357256" description="Methylthioribose-1-phosphate isomerase">
    <location>
        <begin position="1"/>
        <end position="345"/>
    </location>
</feature>
<feature type="active site" description="Proton donor" evidence="1">
    <location>
        <position position="238"/>
    </location>
</feature>
<feature type="binding site" evidence="1">
    <location>
        <begin position="47"/>
        <end position="49"/>
    </location>
    <ligand>
        <name>substrate</name>
    </ligand>
</feature>
<feature type="binding site" evidence="1">
    <location>
        <position position="90"/>
    </location>
    <ligand>
        <name>substrate</name>
    </ligand>
</feature>
<feature type="binding site" evidence="1">
    <location>
        <position position="197"/>
    </location>
    <ligand>
        <name>substrate</name>
    </ligand>
</feature>
<feature type="binding site" evidence="1">
    <location>
        <begin position="248"/>
        <end position="249"/>
    </location>
    <ligand>
        <name>substrate</name>
    </ligand>
</feature>
<feature type="site" description="Transition state stabilizer" evidence="1">
    <location>
        <position position="158"/>
    </location>
</feature>